<dbReference type="EC" id="2.5.1.19" evidence="1"/>
<dbReference type="EMBL" id="CP000117">
    <property type="protein sequence ID" value="ABA21877.1"/>
    <property type="molecule type" value="Genomic_DNA"/>
</dbReference>
<dbReference type="SMR" id="Q3MAV9"/>
<dbReference type="STRING" id="240292.Ava_2259"/>
<dbReference type="KEGG" id="ava:Ava_2259"/>
<dbReference type="eggNOG" id="COG0128">
    <property type="taxonomic scope" value="Bacteria"/>
</dbReference>
<dbReference type="HOGENOM" id="CLU_024321_0_0_3"/>
<dbReference type="BRENDA" id="2.5.1.19">
    <property type="organism ID" value="4371"/>
</dbReference>
<dbReference type="UniPathway" id="UPA00053">
    <property type="reaction ID" value="UER00089"/>
</dbReference>
<dbReference type="Proteomes" id="UP000002533">
    <property type="component" value="Chromosome"/>
</dbReference>
<dbReference type="GO" id="GO:0005737">
    <property type="term" value="C:cytoplasm"/>
    <property type="evidence" value="ECO:0007669"/>
    <property type="project" value="UniProtKB-SubCell"/>
</dbReference>
<dbReference type="GO" id="GO:0003866">
    <property type="term" value="F:3-phosphoshikimate 1-carboxyvinyltransferase activity"/>
    <property type="evidence" value="ECO:0007669"/>
    <property type="project" value="UniProtKB-UniRule"/>
</dbReference>
<dbReference type="GO" id="GO:0008652">
    <property type="term" value="P:amino acid biosynthetic process"/>
    <property type="evidence" value="ECO:0007669"/>
    <property type="project" value="UniProtKB-KW"/>
</dbReference>
<dbReference type="GO" id="GO:0009073">
    <property type="term" value="P:aromatic amino acid family biosynthetic process"/>
    <property type="evidence" value="ECO:0007669"/>
    <property type="project" value="UniProtKB-KW"/>
</dbReference>
<dbReference type="GO" id="GO:0009423">
    <property type="term" value="P:chorismate biosynthetic process"/>
    <property type="evidence" value="ECO:0007669"/>
    <property type="project" value="UniProtKB-UniRule"/>
</dbReference>
<dbReference type="CDD" id="cd01556">
    <property type="entry name" value="EPSP_synthase"/>
    <property type="match status" value="1"/>
</dbReference>
<dbReference type="Gene3D" id="3.65.10.10">
    <property type="entry name" value="Enolpyruvate transferase domain"/>
    <property type="match status" value="2"/>
</dbReference>
<dbReference type="HAMAP" id="MF_00210">
    <property type="entry name" value="EPSP_synth"/>
    <property type="match status" value="1"/>
</dbReference>
<dbReference type="InterPro" id="IPR001986">
    <property type="entry name" value="Enolpyruvate_Tfrase_dom"/>
</dbReference>
<dbReference type="InterPro" id="IPR036968">
    <property type="entry name" value="Enolpyruvate_Tfrase_sf"/>
</dbReference>
<dbReference type="InterPro" id="IPR006264">
    <property type="entry name" value="EPSP_synthase"/>
</dbReference>
<dbReference type="InterPro" id="IPR023193">
    <property type="entry name" value="EPSP_synthase_CS"/>
</dbReference>
<dbReference type="InterPro" id="IPR013792">
    <property type="entry name" value="RNA3'P_cycl/enolpyr_Trfase_a/b"/>
</dbReference>
<dbReference type="NCBIfam" id="TIGR01356">
    <property type="entry name" value="aroA"/>
    <property type="match status" value="1"/>
</dbReference>
<dbReference type="PANTHER" id="PTHR21090">
    <property type="entry name" value="AROM/DEHYDROQUINATE SYNTHASE"/>
    <property type="match status" value="1"/>
</dbReference>
<dbReference type="PANTHER" id="PTHR21090:SF5">
    <property type="entry name" value="PENTAFUNCTIONAL AROM POLYPEPTIDE"/>
    <property type="match status" value="1"/>
</dbReference>
<dbReference type="Pfam" id="PF00275">
    <property type="entry name" value="EPSP_synthase"/>
    <property type="match status" value="1"/>
</dbReference>
<dbReference type="PIRSF" id="PIRSF000505">
    <property type="entry name" value="EPSPS"/>
    <property type="match status" value="1"/>
</dbReference>
<dbReference type="SUPFAM" id="SSF55205">
    <property type="entry name" value="EPT/RTPC-like"/>
    <property type="match status" value="1"/>
</dbReference>
<dbReference type="PROSITE" id="PS00104">
    <property type="entry name" value="EPSP_SYNTHASE_1"/>
    <property type="match status" value="1"/>
</dbReference>
<dbReference type="PROSITE" id="PS00885">
    <property type="entry name" value="EPSP_SYNTHASE_2"/>
    <property type="match status" value="1"/>
</dbReference>
<sequence>MDTIAIPALNRPVDATVEIPGSKSITNRALLVAALAQGDSTLENALFSEDSEYFAKCVEQLGIPITLNPHLAQIQVSGKGGDIPAKQADLFVGLAGTAARFITALVALGNGEYRLDGVPRMRERPMGDLVTVLQNSGIKINFEGNSGFMPYTIYGQQFAGGHFRLKANQTSQQLSALLMIAPYAQQDTTIEVEGTLVSQSYVKMTCRLMADFGVDVTQTDDNQFHIKAGQRYQARHYTIEPDASNASYFFAAAAVTGGRVRVNHLTKQSCQGDILWLNVLEQMGCQVLEGEDYTEVIGPEQLQGIDVDMNDMSDLVQTLGAIAPYANSPVIIRNVEHIRYKETERIRAVVTELRRLGVKVEEFADGMKIEPTPINPAAIETYHDHRMAMAFAVTGLKTPGIVIQDPGCTAKTFPDYFTRFFKMIGQ</sequence>
<organism>
    <name type="scientific">Trichormus variabilis (strain ATCC 29413 / PCC 7937)</name>
    <name type="common">Anabaena variabilis</name>
    <dbReference type="NCBI Taxonomy" id="240292"/>
    <lineage>
        <taxon>Bacteria</taxon>
        <taxon>Bacillati</taxon>
        <taxon>Cyanobacteriota</taxon>
        <taxon>Cyanophyceae</taxon>
        <taxon>Nostocales</taxon>
        <taxon>Nostocaceae</taxon>
        <taxon>Trichormus</taxon>
    </lineage>
</organism>
<name>AROA_TRIV2</name>
<keyword id="KW-0028">Amino-acid biosynthesis</keyword>
<keyword id="KW-0057">Aromatic amino acid biosynthesis</keyword>
<keyword id="KW-0963">Cytoplasm</keyword>
<keyword id="KW-0808">Transferase</keyword>
<feature type="chain" id="PRO_1000012407" description="3-phosphoshikimate 1-carboxyvinyltransferase">
    <location>
        <begin position="1"/>
        <end position="426"/>
    </location>
</feature>
<feature type="active site" description="Proton acceptor" evidence="1">
    <location>
        <position position="314"/>
    </location>
</feature>
<feature type="binding site" evidence="1">
    <location>
        <position position="23"/>
    </location>
    <ligand>
        <name>3-phosphoshikimate</name>
        <dbReference type="ChEBI" id="CHEBI:145989"/>
    </ligand>
</feature>
<feature type="binding site" evidence="1">
    <location>
        <position position="23"/>
    </location>
    <ligand>
        <name>phosphoenolpyruvate</name>
        <dbReference type="ChEBI" id="CHEBI:58702"/>
    </ligand>
</feature>
<feature type="binding site" evidence="1">
    <location>
        <position position="24"/>
    </location>
    <ligand>
        <name>3-phosphoshikimate</name>
        <dbReference type="ChEBI" id="CHEBI:145989"/>
    </ligand>
</feature>
<feature type="binding site" evidence="1">
    <location>
        <position position="28"/>
    </location>
    <ligand>
        <name>3-phosphoshikimate</name>
        <dbReference type="ChEBI" id="CHEBI:145989"/>
    </ligand>
</feature>
<feature type="binding site" evidence="1">
    <location>
        <position position="96"/>
    </location>
    <ligand>
        <name>phosphoenolpyruvate</name>
        <dbReference type="ChEBI" id="CHEBI:58702"/>
    </ligand>
</feature>
<feature type="binding site" evidence="1">
    <location>
        <position position="124"/>
    </location>
    <ligand>
        <name>phosphoenolpyruvate</name>
        <dbReference type="ChEBI" id="CHEBI:58702"/>
    </ligand>
</feature>
<feature type="binding site" evidence="1">
    <location>
        <position position="170"/>
    </location>
    <ligand>
        <name>3-phosphoshikimate</name>
        <dbReference type="ChEBI" id="CHEBI:145989"/>
    </ligand>
</feature>
<feature type="binding site" evidence="1">
    <location>
        <position position="171"/>
    </location>
    <ligand>
        <name>3-phosphoshikimate</name>
        <dbReference type="ChEBI" id="CHEBI:145989"/>
    </ligand>
</feature>
<feature type="binding site" evidence="1">
    <location>
        <position position="172"/>
    </location>
    <ligand>
        <name>3-phosphoshikimate</name>
        <dbReference type="ChEBI" id="CHEBI:145989"/>
    </ligand>
</feature>
<feature type="binding site" evidence="1">
    <location>
        <position position="172"/>
    </location>
    <ligand>
        <name>phosphoenolpyruvate</name>
        <dbReference type="ChEBI" id="CHEBI:58702"/>
    </ligand>
</feature>
<feature type="binding site" evidence="1">
    <location>
        <position position="198"/>
    </location>
    <ligand>
        <name>3-phosphoshikimate</name>
        <dbReference type="ChEBI" id="CHEBI:145989"/>
    </ligand>
</feature>
<feature type="binding site" evidence="1">
    <location>
        <position position="314"/>
    </location>
    <ligand>
        <name>3-phosphoshikimate</name>
        <dbReference type="ChEBI" id="CHEBI:145989"/>
    </ligand>
</feature>
<feature type="binding site" evidence="1">
    <location>
        <position position="341"/>
    </location>
    <ligand>
        <name>3-phosphoshikimate</name>
        <dbReference type="ChEBI" id="CHEBI:145989"/>
    </ligand>
</feature>
<feature type="binding site" evidence="1">
    <location>
        <position position="345"/>
    </location>
    <ligand>
        <name>phosphoenolpyruvate</name>
        <dbReference type="ChEBI" id="CHEBI:58702"/>
    </ligand>
</feature>
<feature type="binding site" evidence="1">
    <location>
        <position position="386"/>
    </location>
    <ligand>
        <name>phosphoenolpyruvate</name>
        <dbReference type="ChEBI" id="CHEBI:58702"/>
    </ligand>
</feature>
<feature type="binding site" evidence="1">
    <location>
        <position position="411"/>
    </location>
    <ligand>
        <name>phosphoenolpyruvate</name>
        <dbReference type="ChEBI" id="CHEBI:58702"/>
    </ligand>
</feature>
<protein>
    <recommendedName>
        <fullName evidence="1">3-phosphoshikimate 1-carboxyvinyltransferase</fullName>
        <ecNumber evidence="1">2.5.1.19</ecNumber>
    </recommendedName>
    <alternativeName>
        <fullName evidence="1">5-enolpyruvylshikimate-3-phosphate synthase</fullName>
        <shortName evidence="1">EPSP synthase</shortName>
        <shortName evidence="1">EPSPS</shortName>
    </alternativeName>
</protein>
<gene>
    <name evidence="1" type="primary">aroA</name>
    <name type="ordered locus">Ava_2259</name>
</gene>
<reference key="1">
    <citation type="journal article" date="2014" name="Stand. Genomic Sci.">
        <title>Complete genome sequence of Anabaena variabilis ATCC 29413.</title>
        <authorList>
            <person name="Thiel T."/>
            <person name="Pratte B.S."/>
            <person name="Zhong J."/>
            <person name="Goodwin L."/>
            <person name="Copeland A."/>
            <person name="Lucas S."/>
            <person name="Han C."/>
            <person name="Pitluck S."/>
            <person name="Land M.L."/>
            <person name="Kyrpides N.C."/>
            <person name="Woyke T."/>
        </authorList>
    </citation>
    <scope>NUCLEOTIDE SEQUENCE [LARGE SCALE GENOMIC DNA]</scope>
    <source>
        <strain>ATCC 29413 / PCC 7937</strain>
    </source>
</reference>
<proteinExistence type="inferred from homology"/>
<comment type="function">
    <text evidence="1">Catalyzes the transfer of the enolpyruvyl moiety of phosphoenolpyruvate (PEP) to the 5-hydroxyl of shikimate-3-phosphate (S3P) to produce enolpyruvyl shikimate-3-phosphate and inorganic phosphate.</text>
</comment>
<comment type="catalytic activity">
    <reaction evidence="1">
        <text>3-phosphoshikimate + phosphoenolpyruvate = 5-O-(1-carboxyvinyl)-3-phosphoshikimate + phosphate</text>
        <dbReference type="Rhea" id="RHEA:21256"/>
        <dbReference type="ChEBI" id="CHEBI:43474"/>
        <dbReference type="ChEBI" id="CHEBI:57701"/>
        <dbReference type="ChEBI" id="CHEBI:58702"/>
        <dbReference type="ChEBI" id="CHEBI:145989"/>
        <dbReference type="EC" id="2.5.1.19"/>
    </reaction>
    <physiologicalReaction direction="left-to-right" evidence="1">
        <dbReference type="Rhea" id="RHEA:21257"/>
    </physiologicalReaction>
</comment>
<comment type="pathway">
    <text evidence="1">Metabolic intermediate biosynthesis; chorismate biosynthesis; chorismate from D-erythrose 4-phosphate and phosphoenolpyruvate: step 6/7.</text>
</comment>
<comment type="subunit">
    <text evidence="1">Monomer.</text>
</comment>
<comment type="subcellular location">
    <subcellularLocation>
        <location evidence="1">Cytoplasm</location>
    </subcellularLocation>
</comment>
<comment type="similarity">
    <text evidence="1">Belongs to the EPSP synthase family.</text>
</comment>
<evidence type="ECO:0000255" key="1">
    <source>
        <dbReference type="HAMAP-Rule" id="MF_00210"/>
    </source>
</evidence>
<accession>Q3MAV9</accession>